<feature type="chain" id="PRO_0000416745" description="Ribonuclease M5">
    <location>
        <begin position="1"/>
        <end position="181"/>
    </location>
</feature>
<feature type="domain" description="Toprim" evidence="1">
    <location>
        <begin position="3"/>
        <end position="86"/>
    </location>
</feature>
<feature type="binding site" evidence="1">
    <location>
        <position position="9"/>
    </location>
    <ligand>
        <name>Mg(2+)</name>
        <dbReference type="ChEBI" id="CHEBI:18420"/>
        <label>1</label>
        <note>catalytic</note>
    </ligand>
</feature>
<feature type="binding site" evidence="1">
    <location>
        <position position="55"/>
    </location>
    <ligand>
        <name>Mg(2+)</name>
        <dbReference type="ChEBI" id="CHEBI:18420"/>
        <label>1</label>
        <note>catalytic</note>
    </ligand>
</feature>
<feature type="binding site" evidence="1">
    <location>
        <position position="55"/>
    </location>
    <ligand>
        <name>Mg(2+)</name>
        <dbReference type="ChEBI" id="CHEBI:18420"/>
        <label>2</label>
    </ligand>
</feature>
<feature type="binding site" evidence="1">
    <location>
        <position position="57"/>
    </location>
    <ligand>
        <name>Mg(2+)</name>
        <dbReference type="ChEBI" id="CHEBI:18420"/>
        <label>2</label>
    </ligand>
</feature>
<evidence type="ECO:0000255" key="1">
    <source>
        <dbReference type="HAMAP-Rule" id="MF_01469"/>
    </source>
</evidence>
<comment type="function">
    <text evidence="1">Required for correct processing of both the 5' and 3' ends of 5S rRNA precursor. Cleaves both sides of a double-stranded region yielding mature 5S rRNA in one step.</text>
</comment>
<comment type="catalytic activity">
    <reaction evidence="1">
        <text>Endonucleolytic cleavage of RNA, removing 21 and 42 nucleotides, respectively, from the 5'- and 3'-termini of a 5S-rRNA precursor.</text>
        <dbReference type="EC" id="3.1.26.8"/>
    </reaction>
</comment>
<comment type="cofactor">
    <cofactor evidence="1">
        <name>Mg(2+)</name>
        <dbReference type="ChEBI" id="CHEBI:18420"/>
    </cofactor>
    <text evidence="1">Binds two Mg(2+) per subunit.</text>
</comment>
<comment type="subcellular location">
    <subcellularLocation>
        <location evidence="1">Cytoplasm</location>
    </subcellularLocation>
</comment>
<comment type="similarity">
    <text evidence="1">Belongs to the ribonuclease M5 family.</text>
</comment>
<dbReference type="EC" id="3.1.26.8" evidence="1"/>
<dbReference type="EMBL" id="CP000727">
    <property type="protein sequence ID" value="ABS37483.1"/>
    <property type="molecule type" value="Genomic_DNA"/>
</dbReference>
<dbReference type="EMBL" id="AM412317">
    <property type="protein sequence ID" value="CAL81636.1"/>
    <property type="molecule type" value="Genomic_DNA"/>
</dbReference>
<dbReference type="RefSeq" id="WP_003356126.1">
    <property type="nucleotide sequence ID" value="NC_009698.1"/>
</dbReference>
<dbReference type="RefSeq" id="YP_001252628.1">
    <property type="nucleotide sequence ID" value="NC_009495.1"/>
</dbReference>
<dbReference type="RefSeq" id="YP_001386038.1">
    <property type="nucleotide sequence ID" value="NC_009698.1"/>
</dbReference>
<dbReference type="SMR" id="A5HXX7"/>
<dbReference type="GeneID" id="5184335"/>
<dbReference type="KEGG" id="cbh:CLC_0127"/>
<dbReference type="KEGG" id="cbo:CBO0080"/>
<dbReference type="PATRIC" id="fig|413999.7.peg.80"/>
<dbReference type="HOGENOM" id="CLU_109405_0_0_9"/>
<dbReference type="PRO" id="PR:A5HXX7"/>
<dbReference type="Proteomes" id="UP000001986">
    <property type="component" value="Chromosome"/>
</dbReference>
<dbReference type="GO" id="GO:0005737">
    <property type="term" value="C:cytoplasm"/>
    <property type="evidence" value="ECO:0007669"/>
    <property type="project" value="UniProtKB-SubCell"/>
</dbReference>
<dbReference type="GO" id="GO:0046872">
    <property type="term" value="F:metal ion binding"/>
    <property type="evidence" value="ECO:0007669"/>
    <property type="project" value="UniProtKB-KW"/>
</dbReference>
<dbReference type="GO" id="GO:0043822">
    <property type="term" value="F:ribonuclease M5 activity"/>
    <property type="evidence" value="ECO:0000318"/>
    <property type="project" value="GO_Central"/>
</dbReference>
<dbReference type="GO" id="GO:0019843">
    <property type="term" value="F:rRNA binding"/>
    <property type="evidence" value="ECO:0007669"/>
    <property type="project" value="UniProtKB-KW"/>
</dbReference>
<dbReference type="GO" id="GO:0006364">
    <property type="term" value="P:rRNA processing"/>
    <property type="evidence" value="ECO:0000318"/>
    <property type="project" value="GO_Central"/>
</dbReference>
<dbReference type="CDD" id="cd01027">
    <property type="entry name" value="TOPRIM_RNase_M5_like"/>
    <property type="match status" value="1"/>
</dbReference>
<dbReference type="FunFam" id="3.40.1360.10:FF:000006">
    <property type="entry name" value="Ribonuclease M5"/>
    <property type="match status" value="1"/>
</dbReference>
<dbReference type="Gene3D" id="3.40.1360.10">
    <property type="match status" value="1"/>
</dbReference>
<dbReference type="HAMAP" id="MF_01469">
    <property type="entry name" value="RNase_M5"/>
    <property type="match status" value="1"/>
</dbReference>
<dbReference type="InterPro" id="IPR004466">
    <property type="entry name" value="RNase_M5"/>
</dbReference>
<dbReference type="InterPro" id="IPR025156">
    <property type="entry name" value="RNase_M5_C"/>
</dbReference>
<dbReference type="InterPro" id="IPR006171">
    <property type="entry name" value="TOPRIM_dom"/>
</dbReference>
<dbReference type="InterPro" id="IPR034141">
    <property type="entry name" value="TOPRIM_RNase_M5-like"/>
</dbReference>
<dbReference type="NCBIfam" id="TIGR00334">
    <property type="entry name" value="5S_RNA_mat_M5"/>
    <property type="match status" value="1"/>
</dbReference>
<dbReference type="PANTHER" id="PTHR39156">
    <property type="entry name" value="RIBONUCLEASE M5"/>
    <property type="match status" value="1"/>
</dbReference>
<dbReference type="PANTHER" id="PTHR39156:SF1">
    <property type="entry name" value="RIBONUCLEASE M5"/>
    <property type="match status" value="1"/>
</dbReference>
<dbReference type="Pfam" id="PF13331">
    <property type="entry name" value="DUF4093"/>
    <property type="match status" value="1"/>
</dbReference>
<dbReference type="Pfam" id="PF01751">
    <property type="entry name" value="Toprim"/>
    <property type="match status" value="1"/>
</dbReference>
<dbReference type="SMART" id="SM00493">
    <property type="entry name" value="TOPRIM"/>
    <property type="match status" value="1"/>
</dbReference>
<dbReference type="SUPFAM" id="SSF110455">
    <property type="entry name" value="Toprim domain"/>
    <property type="match status" value="1"/>
</dbReference>
<dbReference type="PROSITE" id="PS50880">
    <property type="entry name" value="TOPRIM"/>
    <property type="match status" value="1"/>
</dbReference>
<gene>
    <name evidence="1" type="primary">rnmV</name>
    <name type="ordered locus">CBO0080</name>
    <name type="ordered locus">CLC_0127</name>
</gene>
<name>RNM5_CLOBH</name>
<accession>A5HXX7</accession>
<accession>A7G000</accession>
<reference key="1">
    <citation type="journal article" date="2007" name="Genome Res.">
        <title>Genome sequence of a proteolytic (Group I) Clostridium botulinum strain Hall A and comparative analysis of the clostridial genomes.</title>
        <authorList>
            <person name="Sebaihia M."/>
            <person name="Peck M.W."/>
            <person name="Minton N.P."/>
            <person name="Thomson N.R."/>
            <person name="Holden M.T.G."/>
            <person name="Mitchell W.J."/>
            <person name="Carter A.T."/>
            <person name="Bentley S.D."/>
            <person name="Mason D.R."/>
            <person name="Crossman L."/>
            <person name="Paul C.J."/>
            <person name="Ivens A."/>
            <person name="Wells-Bennik M.H.J."/>
            <person name="Davis I.J."/>
            <person name="Cerdeno-Tarraga A.M."/>
            <person name="Churcher C."/>
            <person name="Quail M.A."/>
            <person name="Chillingworth T."/>
            <person name="Feltwell T."/>
            <person name="Fraser A."/>
            <person name="Goodhead I."/>
            <person name="Hance Z."/>
            <person name="Jagels K."/>
            <person name="Larke N."/>
            <person name="Maddison M."/>
            <person name="Moule S."/>
            <person name="Mungall K."/>
            <person name="Norbertczak H."/>
            <person name="Rabbinowitsch E."/>
            <person name="Sanders M."/>
            <person name="Simmonds M."/>
            <person name="White B."/>
            <person name="Whithead S."/>
            <person name="Parkhill J."/>
        </authorList>
    </citation>
    <scope>NUCLEOTIDE SEQUENCE [LARGE SCALE GENOMIC DNA]</scope>
    <source>
        <strain>Hall / ATCC 3502 / NCTC 13319 / Type A</strain>
    </source>
</reference>
<reference key="2">
    <citation type="journal article" date="2007" name="PLoS ONE">
        <title>Analysis of the neurotoxin complex genes in Clostridium botulinum A1-A4 and B1 strains: BoNT/A3, /Ba4 and /B1 clusters are located within plasmids.</title>
        <authorList>
            <person name="Smith T.J."/>
            <person name="Hill K.K."/>
            <person name="Foley B.T."/>
            <person name="Detter J.C."/>
            <person name="Munk A.C."/>
            <person name="Bruce D.C."/>
            <person name="Doggett N.A."/>
            <person name="Smith L.A."/>
            <person name="Marks J.D."/>
            <person name="Xie G."/>
            <person name="Brettin T.S."/>
        </authorList>
    </citation>
    <scope>NUCLEOTIDE SEQUENCE [LARGE SCALE GENOMIC DNA]</scope>
    <source>
        <strain>Hall / ATCC 3502 / NCTC 13319 / Type A</strain>
    </source>
</reference>
<protein>
    <recommendedName>
        <fullName evidence="1">Ribonuclease M5</fullName>
        <ecNumber evidence="1">3.1.26.8</ecNumber>
    </recommendedName>
    <alternativeName>
        <fullName evidence="1">RNase M5</fullName>
    </alternativeName>
    <alternativeName>
        <fullName evidence="1">Ribosomal RNA terminal maturase M5</fullName>
    </alternativeName>
</protein>
<keyword id="KW-0963">Cytoplasm</keyword>
<keyword id="KW-0255">Endonuclease</keyword>
<keyword id="KW-0378">Hydrolase</keyword>
<keyword id="KW-0460">Magnesium</keyword>
<keyword id="KW-0479">Metal-binding</keyword>
<keyword id="KW-0540">Nuclease</keyword>
<keyword id="KW-1185">Reference proteome</keyword>
<keyword id="KW-0690">Ribosome biogenesis</keyword>
<keyword id="KW-0694">RNA-binding</keyword>
<keyword id="KW-0698">rRNA processing</keyword>
<keyword id="KW-0699">rRNA-binding</keyword>
<sequence length="181" mass="20470">MIKEVIVVEGRDDITAVKRAVDAEMIAVGGFGINSKVIKKIREAQKRQGVIVLTDPDYAGEKIRKYICNRVKGVKHAYISQEEGTKEDDIGVENAAPEAIIRALNLAKCEVKQERKEFDMNDMIFFKLTANEESKERREKLGMALGIGYCNTNQFIKRLNNFGITKEEFIKAIKDLDKGNE</sequence>
<proteinExistence type="inferred from homology"/>
<organism>
    <name type="scientific">Clostridium botulinum (strain Hall / ATCC 3502 / NCTC 13319 / Type A)</name>
    <dbReference type="NCBI Taxonomy" id="441771"/>
    <lineage>
        <taxon>Bacteria</taxon>
        <taxon>Bacillati</taxon>
        <taxon>Bacillota</taxon>
        <taxon>Clostridia</taxon>
        <taxon>Eubacteriales</taxon>
        <taxon>Clostridiaceae</taxon>
        <taxon>Clostridium</taxon>
    </lineage>
</organism>